<accession>Q3SKX4</accession>
<gene>
    <name evidence="1" type="primary">rpsO</name>
    <name type="ordered locus">Tbd_0694</name>
</gene>
<proteinExistence type="inferred from homology"/>
<evidence type="ECO:0000255" key="1">
    <source>
        <dbReference type="HAMAP-Rule" id="MF_01343"/>
    </source>
</evidence>
<evidence type="ECO:0000305" key="2"/>
<dbReference type="EMBL" id="CP000116">
    <property type="protein sequence ID" value="AAZ96647.1"/>
    <property type="molecule type" value="Genomic_DNA"/>
</dbReference>
<dbReference type="RefSeq" id="WP_011311206.1">
    <property type="nucleotide sequence ID" value="NC_007404.1"/>
</dbReference>
<dbReference type="SMR" id="Q3SKX4"/>
<dbReference type="STRING" id="292415.Tbd_0694"/>
<dbReference type="KEGG" id="tbd:Tbd_0694"/>
<dbReference type="eggNOG" id="COG0184">
    <property type="taxonomic scope" value="Bacteria"/>
</dbReference>
<dbReference type="HOGENOM" id="CLU_148518_0_0_4"/>
<dbReference type="OrthoDB" id="9799262at2"/>
<dbReference type="Proteomes" id="UP000008291">
    <property type="component" value="Chromosome"/>
</dbReference>
<dbReference type="GO" id="GO:0022627">
    <property type="term" value="C:cytosolic small ribosomal subunit"/>
    <property type="evidence" value="ECO:0007669"/>
    <property type="project" value="TreeGrafter"/>
</dbReference>
<dbReference type="GO" id="GO:0019843">
    <property type="term" value="F:rRNA binding"/>
    <property type="evidence" value="ECO:0007669"/>
    <property type="project" value="UniProtKB-UniRule"/>
</dbReference>
<dbReference type="GO" id="GO:0003735">
    <property type="term" value="F:structural constituent of ribosome"/>
    <property type="evidence" value="ECO:0007669"/>
    <property type="project" value="InterPro"/>
</dbReference>
<dbReference type="GO" id="GO:0006412">
    <property type="term" value="P:translation"/>
    <property type="evidence" value="ECO:0007669"/>
    <property type="project" value="UniProtKB-UniRule"/>
</dbReference>
<dbReference type="CDD" id="cd00353">
    <property type="entry name" value="Ribosomal_S15p_S13e"/>
    <property type="match status" value="1"/>
</dbReference>
<dbReference type="FunFam" id="1.10.287.10:FF:000002">
    <property type="entry name" value="30S ribosomal protein S15"/>
    <property type="match status" value="1"/>
</dbReference>
<dbReference type="Gene3D" id="6.10.250.3130">
    <property type="match status" value="1"/>
</dbReference>
<dbReference type="Gene3D" id="1.10.287.10">
    <property type="entry name" value="S15/NS1, RNA-binding"/>
    <property type="match status" value="1"/>
</dbReference>
<dbReference type="HAMAP" id="MF_01343_B">
    <property type="entry name" value="Ribosomal_uS15_B"/>
    <property type="match status" value="1"/>
</dbReference>
<dbReference type="InterPro" id="IPR000589">
    <property type="entry name" value="Ribosomal_uS15"/>
</dbReference>
<dbReference type="InterPro" id="IPR005290">
    <property type="entry name" value="Ribosomal_uS15_bac-type"/>
</dbReference>
<dbReference type="InterPro" id="IPR009068">
    <property type="entry name" value="uS15_NS1_RNA-bd_sf"/>
</dbReference>
<dbReference type="NCBIfam" id="TIGR00952">
    <property type="entry name" value="S15_bact"/>
    <property type="match status" value="1"/>
</dbReference>
<dbReference type="PANTHER" id="PTHR23321">
    <property type="entry name" value="RIBOSOMAL PROTEIN S15, BACTERIAL AND ORGANELLAR"/>
    <property type="match status" value="1"/>
</dbReference>
<dbReference type="PANTHER" id="PTHR23321:SF26">
    <property type="entry name" value="SMALL RIBOSOMAL SUBUNIT PROTEIN US15M"/>
    <property type="match status" value="1"/>
</dbReference>
<dbReference type="Pfam" id="PF00312">
    <property type="entry name" value="Ribosomal_S15"/>
    <property type="match status" value="1"/>
</dbReference>
<dbReference type="SMART" id="SM01387">
    <property type="entry name" value="Ribosomal_S15"/>
    <property type="match status" value="1"/>
</dbReference>
<dbReference type="SUPFAM" id="SSF47060">
    <property type="entry name" value="S15/NS1 RNA-binding domain"/>
    <property type="match status" value="1"/>
</dbReference>
<dbReference type="PROSITE" id="PS00362">
    <property type="entry name" value="RIBOSOMAL_S15"/>
    <property type="match status" value="1"/>
</dbReference>
<name>RS15_THIDA</name>
<organism>
    <name type="scientific">Thiobacillus denitrificans (strain ATCC 25259 / T1)</name>
    <dbReference type="NCBI Taxonomy" id="292415"/>
    <lineage>
        <taxon>Bacteria</taxon>
        <taxon>Pseudomonadati</taxon>
        <taxon>Pseudomonadota</taxon>
        <taxon>Betaproteobacteria</taxon>
        <taxon>Nitrosomonadales</taxon>
        <taxon>Thiobacillaceae</taxon>
        <taxon>Thiobacillus</taxon>
    </lineage>
</organism>
<sequence>MAVTVAQKAQIVQDYQRAAADTGSPEVQVALLTARINDLTGHFKANIKDHHSRRGLLKMVSRRRKLLDYLKRTNLESYKTLIERLGLRK</sequence>
<feature type="chain" id="PRO_0000115575" description="Small ribosomal subunit protein uS15">
    <location>
        <begin position="1"/>
        <end position="89"/>
    </location>
</feature>
<comment type="function">
    <text evidence="1">One of the primary rRNA binding proteins, it binds directly to 16S rRNA where it helps nucleate assembly of the platform of the 30S subunit by binding and bridging several RNA helices of the 16S rRNA.</text>
</comment>
<comment type="function">
    <text evidence="1">Forms an intersubunit bridge (bridge B4) with the 23S rRNA of the 50S subunit in the ribosome.</text>
</comment>
<comment type="subunit">
    <text evidence="1">Part of the 30S ribosomal subunit. Forms a bridge to the 50S subunit in the 70S ribosome, contacting the 23S rRNA.</text>
</comment>
<comment type="similarity">
    <text evidence="1">Belongs to the universal ribosomal protein uS15 family.</text>
</comment>
<keyword id="KW-1185">Reference proteome</keyword>
<keyword id="KW-0687">Ribonucleoprotein</keyword>
<keyword id="KW-0689">Ribosomal protein</keyword>
<keyword id="KW-0694">RNA-binding</keyword>
<keyword id="KW-0699">rRNA-binding</keyword>
<reference key="1">
    <citation type="journal article" date="2006" name="J. Bacteriol.">
        <title>The genome sequence of the obligately chemolithoautotrophic, facultatively anaerobic bacterium Thiobacillus denitrificans.</title>
        <authorList>
            <person name="Beller H.R."/>
            <person name="Chain P.S."/>
            <person name="Letain T.E."/>
            <person name="Chakicherla A."/>
            <person name="Larimer F.W."/>
            <person name="Richardson P.M."/>
            <person name="Coleman M.A."/>
            <person name="Wood A.P."/>
            <person name="Kelly D.P."/>
        </authorList>
    </citation>
    <scope>NUCLEOTIDE SEQUENCE [LARGE SCALE GENOMIC DNA]</scope>
    <source>
        <strain>ATCC 25259 / T1</strain>
    </source>
</reference>
<protein>
    <recommendedName>
        <fullName evidence="1">Small ribosomal subunit protein uS15</fullName>
    </recommendedName>
    <alternativeName>
        <fullName evidence="2">30S ribosomal protein S15</fullName>
    </alternativeName>
</protein>